<gene>
    <name type="ordered locus">YOL075C</name>
    <name type="ORF">YOL074C</name>
</gene>
<organism>
    <name type="scientific">Saccharomyces cerevisiae (strain ATCC 204508 / S288c)</name>
    <name type="common">Baker's yeast</name>
    <dbReference type="NCBI Taxonomy" id="559292"/>
    <lineage>
        <taxon>Eukaryota</taxon>
        <taxon>Fungi</taxon>
        <taxon>Dikarya</taxon>
        <taxon>Ascomycota</taxon>
        <taxon>Saccharomycotina</taxon>
        <taxon>Saccharomycetes</taxon>
        <taxon>Saccharomycetales</taxon>
        <taxon>Saccharomycetaceae</taxon>
        <taxon>Saccharomyces</taxon>
    </lineage>
</organism>
<reference key="1">
    <citation type="journal article" date="1997" name="Yeast">
        <title>Sequence analysis of a 33.2 kb segment from the left arm of yeast chromosome XV reveals eight known genes and ten new open reading frames including homologues of ABC transporters, inositol phosphatases and human expressed sequence tags.</title>
        <authorList>
            <person name="Tzermia M."/>
            <person name="Katsoulou C."/>
            <person name="Alexandraki D."/>
        </authorList>
    </citation>
    <scope>NUCLEOTIDE SEQUENCE [GENOMIC DNA]</scope>
</reference>
<reference key="2">
    <citation type="journal article" date="1997" name="Nature">
        <title>The nucleotide sequence of Saccharomyces cerevisiae chromosome XV.</title>
        <authorList>
            <person name="Dujon B."/>
            <person name="Albermann K."/>
            <person name="Aldea M."/>
            <person name="Alexandraki D."/>
            <person name="Ansorge W."/>
            <person name="Arino J."/>
            <person name="Benes V."/>
            <person name="Bohn C."/>
            <person name="Bolotin-Fukuhara M."/>
            <person name="Bordonne R."/>
            <person name="Boyer J."/>
            <person name="Camasses A."/>
            <person name="Casamayor A."/>
            <person name="Casas C."/>
            <person name="Cheret G."/>
            <person name="Cziepluch C."/>
            <person name="Daignan-Fornier B."/>
            <person name="Dang V.-D."/>
            <person name="de Haan M."/>
            <person name="Delius H."/>
            <person name="Durand P."/>
            <person name="Fairhead C."/>
            <person name="Feldmann H."/>
            <person name="Gaillon L."/>
            <person name="Galisson F."/>
            <person name="Gamo F.-J."/>
            <person name="Gancedo C."/>
            <person name="Goffeau A."/>
            <person name="Goulding S.E."/>
            <person name="Grivell L.A."/>
            <person name="Habbig B."/>
            <person name="Hand N.J."/>
            <person name="Hani J."/>
            <person name="Hattenhorst U."/>
            <person name="Hebling U."/>
            <person name="Hernando Y."/>
            <person name="Herrero E."/>
            <person name="Heumann K."/>
            <person name="Hiesel R."/>
            <person name="Hilger F."/>
            <person name="Hofmann B."/>
            <person name="Hollenberg C.P."/>
            <person name="Hughes B."/>
            <person name="Jauniaux J.-C."/>
            <person name="Kalogeropoulos A."/>
            <person name="Katsoulou C."/>
            <person name="Kordes E."/>
            <person name="Lafuente M.J."/>
            <person name="Landt O."/>
            <person name="Louis E.J."/>
            <person name="Maarse A.C."/>
            <person name="Madania A."/>
            <person name="Mannhaupt G."/>
            <person name="Marck C."/>
            <person name="Martin R.P."/>
            <person name="Mewes H.-W."/>
            <person name="Michaux G."/>
            <person name="Paces V."/>
            <person name="Parle-McDermott A.G."/>
            <person name="Pearson B.M."/>
            <person name="Perrin A."/>
            <person name="Pettersson B."/>
            <person name="Poch O."/>
            <person name="Pohl T.M."/>
            <person name="Poirey R."/>
            <person name="Portetelle D."/>
            <person name="Pujol A."/>
            <person name="Purnelle B."/>
            <person name="Ramezani Rad M."/>
            <person name="Rechmann S."/>
            <person name="Schwager C."/>
            <person name="Schweizer M."/>
            <person name="Sor F."/>
            <person name="Sterky F."/>
            <person name="Tarassov I.A."/>
            <person name="Teodoru C."/>
            <person name="Tettelin H."/>
            <person name="Thierry A."/>
            <person name="Tobiasch E."/>
            <person name="Tzermia M."/>
            <person name="Uhlen M."/>
            <person name="Unseld M."/>
            <person name="Valens M."/>
            <person name="Vandenbol M."/>
            <person name="Vetter I."/>
            <person name="Vlcek C."/>
            <person name="Voet M."/>
            <person name="Volckaert G."/>
            <person name="Voss H."/>
            <person name="Wambutt R."/>
            <person name="Wedler H."/>
            <person name="Wiemann S."/>
            <person name="Winsor B."/>
            <person name="Wolfe K.H."/>
            <person name="Zollner A."/>
            <person name="Zumstein E."/>
            <person name="Kleine K."/>
        </authorList>
    </citation>
    <scope>NUCLEOTIDE SEQUENCE [LARGE SCALE GENOMIC DNA]</scope>
    <source>
        <strain>ATCC 204508 / S288c</strain>
    </source>
</reference>
<reference key="3">
    <citation type="journal article" date="2014" name="G3 (Bethesda)">
        <title>The reference genome sequence of Saccharomyces cerevisiae: Then and now.</title>
        <authorList>
            <person name="Engel S.R."/>
            <person name="Dietrich F.S."/>
            <person name="Fisk D.G."/>
            <person name="Binkley G."/>
            <person name="Balakrishnan R."/>
            <person name="Costanzo M.C."/>
            <person name="Dwight S.S."/>
            <person name="Hitz B.C."/>
            <person name="Karra K."/>
            <person name="Nash R.S."/>
            <person name="Weng S."/>
            <person name="Wong E.D."/>
            <person name="Lloyd P."/>
            <person name="Skrzypek M.S."/>
            <person name="Miyasato S.R."/>
            <person name="Simison M."/>
            <person name="Cherry J.M."/>
        </authorList>
    </citation>
    <scope>GENOME REANNOTATION</scope>
    <scope>SEQUENCE REVISION TO 1164</scope>
    <source>
        <strain>ATCC 204508 / S288c</strain>
    </source>
</reference>
<reference key="4">
    <citation type="journal article" date="2006" name="Proc. Natl. Acad. Sci. U.S.A.">
        <title>A global topology map of the Saccharomyces cerevisiae membrane proteome.</title>
        <authorList>
            <person name="Kim H."/>
            <person name="Melen K."/>
            <person name="Oesterberg M."/>
            <person name="von Heijne G."/>
        </authorList>
    </citation>
    <scope>TOPOLOGY [LARGE SCALE ANALYSIS]</scope>
    <source>
        <strain>ATCC 208353 / W303-1A</strain>
    </source>
</reference>
<reference key="5">
    <citation type="journal article" date="2008" name="Mol. Cell. Proteomics">
        <title>A multidimensional chromatography technology for in-depth phosphoproteome analysis.</title>
        <authorList>
            <person name="Albuquerque C.P."/>
            <person name="Smolka M.B."/>
            <person name="Payne S.H."/>
            <person name="Bafna V."/>
            <person name="Eng J."/>
            <person name="Zhou H."/>
        </authorList>
    </citation>
    <scope>IDENTIFICATION BY MASS SPECTROMETRY [LARGE SCALE ANALYSIS]</scope>
</reference>
<accession>Q08234</accession>
<accession>D6W1Z3</accession>
<accession>Q08233</accession>
<evidence type="ECO:0000255" key="1"/>
<evidence type="ECO:0000255" key="2">
    <source>
        <dbReference type="PROSITE-ProRule" id="PRU00434"/>
    </source>
</evidence>
<evidence type="ECO:0000305" key="3"/>
<dbReference type="EMBL" id="Z74817">
    <property type="protein sequence ID" value="CAA99085.1"/>
    <property type="molecule type" value="Genomic_DNA"/>
</dbReference>
<dbReference type="EMBL" id="Z74816">
    <property type="protein sequence ID" value="CAA99084.1"/>
    <property type="molecule type" value="Genomic_DNA"/>
</dbReference>
<dbReference type="EMBL" id="BK006948">
    <property type="protein sequence ID" value="DAA10709.2"/>
    <property type="molecule type" value="Genomic_DNA"/>
</dbReference>
<dbReference type="PIR" id="S77690">
    <property type="entry name" value="S77690"/>
</dbReference>
<dbReference type="RefSeq" id="NP_014567.2">
    <property type="nucleotide sequence ID" value="NM_001183329.2"/>
</dbReference>
<dbReference type="SMR" id="Q08234"/>
<dbReference type="BioGRID" id="34327">
    <property type="interactions" value="50"/>
</dbReference>
<dbReference type="DIP" id="DIP-8021N"/>
<dbReference type="FunCoup" id="Q08234">
    <property type="interactions" value="108"/>
</dbReference>
<dbReference type="IntAct" id="Q08234">
    <property type="interactions" value="21"/>
</dbReference>
<dbReference type="MINT" id="Q08234"/>
<dbReference type="STRING" id="4932.YOL075C"/>
<dbReference type="CarbonylDB" id="Q08234"/>
<dbReference type="GlyGen" id="Q08234">
    <property type="glycosylation" value="9 sites"/>
</dbReference>
<dbReference type="iPTMnet" id="Q08234"/>
<dbReference type="PaxDb" id="4932-YOL075C"/>
<dbReference type="PeptideAtlas" id="Q08234"/>
<dbReference type="EnsemblFungi" id="YOL075C_mRNA">
    <property type="protein sequence ID" value="YOL075C"/>
    <property type="gene ID" value="YOL075C"/>
</dbReference>
<dbReference type="GeneID" id="854080"/>
<dbReference type="KEGG" id="sce:YOL075C"/>
<dbReference type="AGR" id="SGD:S000005435"/>
<dbReference type="SGD" id="S000005435">
    <property type="gene designation" value="YOL075C"/>
</dbReference>
<dbReference type="VEuPathDB" id="FungiDB:YOL075C"/>
<dbReference type="eggNOG" id="KOG0065">
    <property type="taxonomic scope" value="Eukaryota"/>
</dbReference>
<dbReference type="GeneTree" id="ENSGT00940000159739"/>
<dbReference type="HOGENOM" id="CLU_000604_57_4_1"/>
<dbReference type="InParanoid" id="Q08234"/>
<dbReference type="OMA" id="ACGYFVQ"/>
<dbReference type="OrthoDB" id="66620at2759"/>
<dbReference type="BioCyc" id="YEAST:G3O-33479-MONOMER"/>
<dbReference type="Reactome" id="R-SCE-1369062">
    <property type="pathway name" value="ABC transporters in lipid homeostasis"/>
</dbReference>
<dbReference type="Reactome" id="R-SCE-8964058">
    <property type="pathway name" value="HDL remodeling"/>
</dbReference>
<dbReference type="BioGRID-ORCS" id="854080">
    <property type="hits" value="0 hits in 10 CRISPR screens"/>
</dbReference>
<dbReference type="PRO" id="PR:Q08234"/>
<dbReference type="Proteomes" id="UP000002311">
    <property type="component" value="Chromosome XV"/>
</dbReference>
<dbReference type="RNAct" id="Q08234">
    <property type="molecule type" value="protein"/>
</dbReference>
<dbReference type="GO" id="GO:0071944">
    <property type="term" value="C:cell periphery"/>
    <property type="evidence" value="ECO:0007005"/>
    <property type="project" value="SGD"/>
</dbReference>
<dbReference type="GO" id="GO:0000329">
    <property type="term" value="C:fungal-type vacuole membrane"/>
    <property type="evidence" value="ECO:0000314"/>
    <property type="project" value="SGD"/>
</dbReference>
<dbReference type="GO" id="GO:0016020">
    <property type="term" value="C:membrane"/>
    <property type="evidence" value="ECO:0000318"/>
    <property type="project" value="GO_Central"/>
</dbReference>
<dbReference type="GO" id="GO:0140359">
    <property type="term" value="F:ABC-type transporter activity"/>
    <property type="evidence" value="ECO:0007669"/>
    <property type="project" value="InterPro"/>
</dbReference>
<dbReference type="GO" id="GO:0005524">
    <property type="term" value="F:ATP binding"/>
    <property type="evidence" value="ECO:0007669"/>
    <property type="project" value="UniProtKB-KW"/>
</dbReference>
<dbReference type="GO" id="GO:0016887">
    <property type="term" value="F:ATP hydrolysis activity"/>
    <property type="evidence" value="ECO:0007669"/>
    <property type="project" value="InterPro"/>
</dbReference>
<dbReference type="GO" id="GO:0042626">
    <property type="term" value="F:ATPase-coupled transmembrane transporter activity"/>
    <property type="evidence" value="ECO:0000318"/>
    <property type="project" value="GO_Central"/>
</dbReference>
<dbReference type="GO" id="GO:0055085">
    <property type="term" value="P:transmembrane transport"/>
    <property type="evidence" value="ECO:0000318"/>
    <property type="project" value="GO_Central"/>
</dbReference>
<dbReference type="FunFam" id="3.40.50.300:FF:001882">
    <property type="entry name" value="ABC efflux transporter, putative"/>
    <property type="match status" value="1"/>
</dbReference>
<dbReference type="FunFam" id="3.40.50.300:FF:001433">
    <property type="entry name" value="ABC transporter, putative"/>
    <property type="match status" value="1"/>
</dbReference>
<dbReference type="Gene3D" id="3.40.50.300">
    <property type="entry name" value="P-loop containing nucleotide triphosphate hydrolases"/>
    <property type="match status" value="2"/>
</dbReference>
<dbReference type="InterPro" id="IPR003593">
    <property type="entry name" value="AAA+_ATPase"/>
</dbReference>
<dbReference type="InterPro" id="IPR013525">
    <property type="entry name" value="ABC2_TM"/>
</dbReference>
<dbReference type="InterPro" id="IPR003439">
    <property type="entry name" value="ABC_transporter-like_ATP-bd"/>
</dbReference>
<dbReference type="InterPro" id="IPR017871">
    <property type="entry name" value="ABC_transporter-like_CS"/>
</dbReference>
<dbReference type="InterPro" id="IPR043926">
    <property type="entry name" value="ABCG_dom"/>
</dbReference>
<dbReference type="InterPro" id="IPR050352">
    <property type="entry name" value="ABCG_transporters"/>
</dbReference>
<dbReference type="InterPro" id="IPR027417">
    <property type="entry name" value="P-loop_NTPase"/>
</dbReference>
<dbReference type="PANTHER" id="PTHR48041">
    <property type="entry name" value="ABC TRANSPORTER G FAMILY MEMBER 28"/>
    <property type="match status" value="1"/>
</dbReference>
<dbReference type="PANTHER" id="PTHR48041:SF119">
    <property type="entry name" value="ROA1P"/>
    <property type="match status" value="1"/>
</dbReference>
<dbReference type="Pfam" id="PF01061">
    <property type="entry name" value="ABC2_membrane"/>
    <property type="match status" value="2"/>
</dbReference>
<dbReference type="Pfam" id="PF19055">
    <property type="entry name" value="ABC2_membrane_7"/>
    <property type="match status" value="2"/>
</dbReference>
<dbReference type="Pfam" id="PF00005">
    <property type="entry name" value="ABC_tran"/>
    <property type="match status" value="2"/>
</dbReference>
<dbReference type="SMART" id="SM00382">
    <property type="entry name" value="AAA"/>
    <property type="match status" value="2"/>
</dbReference>
<dbReference type="SUPFAM" id="SSF52540">
    <property type="entry name" value="P-loop containing nucleoside triphosphate hydrolases"/>
    <property type="match status" value="2"/>
</dbReference>
<dbReference type="PROSITE" id="PS00211">
    <property type="entry name" value="ABC_TRANSPORTER_1"/>
    <property type="match status" value="2"/>
</dbReference>
<dbReference type="PROSITE" id="PS50893">
    <property type="entry name" value="ABC_TRANSPORTER_2"/>
    <property type="match status" value="2"/>
</dbReference>
<feature type="chain" id="PRO_0000093467" description="Uncharacterized ABC transporter ATP-binding protein/permease YOL075C">
    <location>
        <begin position="1"/>
        <end position="1294"/>
    </location>
</feature>
<feature type="topological domain" description="Extracellular" evidence="1">
    <location>
        <begin position="1"/>
        <end position="375"/>
    </location>
</feature>
<feature type="transmembrane region" description="Helical" evidence="1">
    <location>
        <begin position="376"/>
        <end position="396"/>
    </location>
</feature>
<feature type="topological domain" description="Cytoplasmic" evidence="1">
    <location>
        <begin position="397"/>
        <end position="495"/>
    </location>
</feature>
<feature type="transmembrane region" description="Helical" evidence="1">
    <location>
        <begin position="496"/>
        <end position="516"/>
    </location>
</feature>
<feature type="topological domain" description="Extracellular" evidence="1">
    <location>
        <begin position="517"/>
        <end position="530"/>
    </location>
</feature>
<feature type="transmembrane region" description="Helical" evidence="1">
    <location>
        <begin position="531"/>
        <end position="551"/>
    </location>
</feature>
<feature type="topological domain" description="Cytoplasmic" evidence="1">
    <location>
        <begin position="552"/>
        <end position="604"/>
    </location>
</feature>
<feature type="transmembrane region" description="Helical" evidence="1">
    <location>
        <begin position="605"/>
        <end position="625"/>
    </location>
</feature>
<feature type="topological domain" description="Extracellular" evidence="1">
    <location>
        <begin position="626"/>
        <end position="1038"/>
    </location>
</feature>
<feature type="transmembrane region" description="Helical" evidence="1">
    <location>
        <begin position="1039"/>
        <end position="1059"/>
    </location>
</feature>
<feature type="topological domain" description="Cytoplasmic" evidence="1">
    <location>
        <begin position="1060"/>
        <end position="1120"/>
    </location>
</feature>
<feature type="transmembrane region" description="Helical" evidence="1">
    <location>
        <begin position="1121"/>
        <end position="1141"/>
    </location>
</feature>
<feature type="topological domain" description="Extracellular" evidence="1">
    <location>
        <begin position="1142"/>
        <end position="1266"/>
    </location>
</feature>
<feature type="transmembrane region" description="Helical" evidence="1">
    <location>
        <begin position="1267"/>
        <end position="1287"/>
    </location>
</feature>
<feature type="topological domain" description="Cytoplasmic" evidence="1">
    <location>
        <begin position="1288"/>
        <end position="1294"/>
    </location>
</feature>
<feature type="domain" description="ABC transporter 1" evidence="2">
    <location>
        <begin position="28"/>
        <end position="287"/>
    </location>
</feature>
<feature type="domain" description="ABC transporter 2" evidence="2">
    <location>
        <begin position="679"/>
        <end position="941"/>
    </location>
</feature>
<feature type="binding site" evidence="2">
    <location>
        <begin position="62"/>
        <end position="69"/>
    </location>
    <ligand>
        <name>ATP</name>
        <dbReference type="ChEBI" id="CHEBI:30616"/>
        <label>1</label>
    </ligand>
</feature>
<feature type="binding site" evidence="2">
    <location>
        <begin position="727"/>
        <end position="734"/>
    </location>
    <ligand>
        <name>ATP</name>
        <dbReference type="ChEBI" id="CHEBI:30616"/>
        <label>2</label>
    </ligand>
</feature>
<feature type="glycosylation site" description="N-linked (GlcNAc...) asparagine" evidence="1">
    <location>
        <position position="41"/>
    </location>
</feature>
<feature type="glycosylation site" description="N-linked (GlcNAc...) asparagine" evidence="1">
    <location>
        <position position="86"/>
    </location>
</feature>
<feature type="glycosylation site" description="N-linked (GlcNAc...) asparagine" evidence="1">
    <location>
        <position position="101"/>
    </location>
</feature>
<feature type="glycosylation site" description="N-linked (GlcNAc...) asparagine" evidence="1">
    <location>
        <position position="151"/>
    </location>
</feature>
<feature type="glycosylation site" description="N-linked (GlcNAc...) asparagine" evidence="1">
    <location>
        <position position="341"/>
    </location>
</feature>
<feature type="glycosylation site" description="N-linked (GlcNAc...) asparagine" evidence="1">
    <location>
        <position position="349"/>
    </location>
</feature>
<feature type="glycosylation site" description="N-linked (GlcNAc...) asparagine" evidence="1">
    <location>
        <position position="371"/>
    </location>
</feature>
<feature type="glycosylation site" description="N-linked (GlcNAc...) asparagine" evidence="1">
    <location>
        <position position="528"/>
    </location>
</feature>
<feature type="glycosylation site" description="N-linked (GlcNAc...) asparagine" evidence="1">
    <location>
        <position position="983"/>
    </location>
</feature>
<feature type="sequence conflict" description="In Ref. 1 and 2; CAA99085." evidence="3" ref="1 2">
    <original>A</original>
    <variation>R</variation>
    <location>
        <position position="1164"/>
    </location>
</feature>
<name>YO075_YEAST</name>
<comment type="interaction">
    <interactant intactId="EBI-29278">
        <id>Q08234</id>
    </interactant>
    <interactant intactId="EBI-28349">
        <id>P48558</id>
        <label>BXI1</label>
    </interactant>
    <organismsDiffer>false</organismsDiffer>
    <experiments>2</experiments>
</comment>
<comment type="interaction">
    <interactant intactId="EBI-29278">
        <id>Q08234</id>
    </interactant>
    <interactant intactId="EBI-13038">
        <id>P33302</id>
        <label>PDR5</label>
    </interactant>
    <organismsDiffer>false</organismsDiffer>
    <experiments>3</experiments>
</comment>
<comment type="subcellular location">
    <subcellularLocation>
        <location>Membrane</location>
        <topology>Multi-pass membrane protein</topology>
    </subcellularLocation>
</comment>
<comment type="similarity">
    <text evidence="3">Belongs to the ABC transporter superfamily. ABCG family. PDR (TC 3.A.1.205) subfamily.</text>
</comment>
<proteinExistence type="evidence at protein level"/>
<keyword id="KW-0067">ATP-binding</keyword>
<keyword id="KW-0325">Glycoprotein</keyword>
<keyword id="KW-0472">Membrane</keyword>
<keyword id="KW-0547">Nucleotide-binding</keyword>
<keyword id="KW-1185">Reference proteome</keyword>
<keyword id="KW-0677">Repeat</keyword>
<keyword id="KW-0812">Transmembrane</keyword>
<keyword id="KW-1133">Transmembrane helix</keyword>
<keyword id="KW-0813">Transport</keyword>
<sequence length="1294" mass="145072">MSQQENGDVATELIENRLSFSRIPRISLHVRDLSIVASKTNTTLVNTFSMDLPSGSVMAVMGGSGSGKTTLLNVLASKISGGLTHNGSIRYVLEDTGSEPNETEPKRAHLDGQDHPIQKHVIMAYLPQQDVLSPRLTCRETLKFAADLKLNSSERTKKLMVEQLIEELGLKDCADTLVGDNSHRGLSGGEKRRLSIGTQMISNPSIMFLDEPTTGLDAYSAFLVIKTLKKLAKEDGRTFIMSIHQPRSDILFLLDQVCILSKGNVVYCDKMDNTIPYFESIGYHVPQLVNPADYFIDLSSVDSRSDKEEAATQSRLNSLIDHWHDYERTHLQLQAESYISNATEIQIQNMTTRLPFWKQVTVLTRRNFKLNFSDYVTLISTFAEPLIIGTVCGWIYYKPDKSSIGGLRTTTACLYASTILQCYLYLLFDTYRLCEQDIALYDRERAEGSVTPLAFIVARKISLFLSDDFAMTMIFVSITYFMFGLEADARKFFYQFAVVFLCQLSCSGLSMLSVAVSRDFSKASLVGNMTFTVLSMGCGFFVNAKVMPVYVRWIKYIAFTWYSFGTLMSSTFTNSYCTTDNLDECLGNQILEVYGFPRNWITVPAVVLLCWSVGYFVVGAIILYLHKIDITLQNEVKSKQKKIKKKSPTGMKPEIQLLDDVYHQKDLEAEKGKNIHITIKLEDIDLRVIFSAPFSNWKEGNFHHETKEILQSVNAIFKPGMINAIMGPSGSGKSSLLNLISGRLKSSVFAKFDTSGSIMFNDIQVSELMFKNVCSYVSQDDDHLLAALTVKETLKYAAALRLHHLTEAERMERTDNLIRSLGLKHCENNIIGNEFVKGISGGEKRRVTMGVQLLNDPPILLLDEPTSGLDSFTSATILEILEKLCREQGKTIIITIHQPRSELFKRFGNVLLLAKSGRTAFNGSPDEMIAYFTELGYNCPSFTNVADFFLDLISVNTQNEQNEISSRARVEKILSAWKANMDNESLSPTPISEKQQYSQESFFTEYSEFVRKPANLVLAYIVNVKRQFTTTRRSFDSLMARIAQIPGLGVIFALFFAPVKHNYTSISNRLGLAQESTALYFVGMLGNLACYPTERDYFYEEYNDNVYGIAPFFLAYMTLELPLSALASVLYAVFTVLACGLPRTAGNFFATVYCSFIVTCCGEALGIMTNTFFERPGFVVNCISIILSIGTQMSGLMSLGMSRVLKGFNYLNPVGYTSMIIINFAFPGNLKLTCEDGGKNSDGTCEFANGHDVLVSYGLVRNTQKYLGIIVCVAIIYRLIAFFILKAKLEWIKW</sequence>
<protein>
    <recommendedName>
        <fullName>Uncharacterized ABC transporter ATP-binding protein/permease YOL075C</fullName>
    </recommendedName>
</protein>